<comment type="function">
    <text evidence="1">Isomerase that catalyzes the conversion of deoxy-ribose 1-phosphate (dRib-1-P) and ribose 1-phosphate (Rib-1-P) to deoxy-ribose 5-phosphate (dRib-5-P) and ribose 5-phosphate (Rib-5-P), respectively.</text>
</comment>
<comment type="catalytic activity">
    <reaction evidence="1">
        <text>2-deoxy-alpha-D-ribose 1-phosphate = 2-deoxy-D-ribose 5-phosphate</text>
        <dbReference type="Rhea" id="RHEA:27658"/>
        <dbReference type="ChEBI" id="CHEBI:57259"/>
        <dbReference type="ChEBI" id="CHEBI:62877"/>
        <dbReference type="EC" id="5.4.2.7"/>
    </reaction>
</comment>
<comment type="catalytic activity">
    <reaction evidence="1">
        <text>alpha-D-ribose 1-phosphate = D-ribose 5-phosphate</text>
        <dbReference type="Rhea" id="RHEA:18793"/>
        <dbReference type="ChEBI" id="CHEBI:57720"/>
        <dbReference type="ChEBI" id="CHEBI:78346"/>
        <dbReference type="EC" id="5.4.2.7"/>
    </reaction>
</comment>
<comment type="cofactor">
    <cofactor evidence="1">
        <name>Mn(2+)</name>
        <dbReference type="ChEBI" id="CHEBI:29035"/>
    </cofactor>
    <text evidence="1">Binds 2 manganese ions.</text>
</comment>
<comment type="pathway">
    <text evidence="1">Carbohydrate degradation; 2-deoxy-D-ribose 1-phosphate degradation; D-glyceraldehyde 3-phosphate and acetaldehyde from 2-deoxy-alpha-D-ribose 1-phosphate: step 1/2.</text>
</comment>
<comment type="subcellular location">
    <subcellularLocation>
        <location evidence="1">Cytoplasm</location>
    </subcellularLocation>
</comment>
<comment type="similarity">
    <text evidence="1">Belongs to the phosphopentomutase family.</text>
</comment>
<gene>
    <name evidence="1" type="primary">deoB</name>
    <name type="ordered locus">SCH_4417</name>
</gene>
<reference key="1">
    <citation type="journal article" date="2005" name="Nucleic Acids Res.">
        <title>The genome sequence of Salmonella enterica serovar Choleraesuis, a highly invasive and resistant zoonotic pathogen.</title>
        <authorList>
            <person name="Chiu C.-H."/>
            <person name="Tang P."/>
            <person name="Chu C."/>
            <person name="Hu S."/>
            <person name="Bao Q."/>
            <person name="Yu J."/>
            <person name="Chou Y.-Y."/>
            <person name="Wang H.-S."/>
            <person name="Lee Y.-S."/>
        </authorList>
    </citation>
    <scope>NUCLEOTIDE SEQUENCE [LARGE SCALE GENOMIC DNA]</scope>
    <source>
        <strain>SC-B67</strain>
    </source>
</reference>
<name>DEOB_SALCH</name>
<proteinExistence type="inferred from homology"/>
<sequence>MKRAFIMVLDSFGIGATEDADRFGDVGSDTLGHIAEACANGEADNGRKGPLNLPNLTRLGLVKAHEGSTGKIAAGMDGNADVIGAYAWAHELSSGKDTPSGHWEIAGVPVLFDWGYFSDHENSFPQELLDKLVKRANLPGYLGNCHSSGTVILDQLGEEHMKTGKPIFYTSADSVFQIACHEETFGLDKLYELCEIAREELTEGGYNIGRVIARPFIGDKAGNFQRTGNRHDLAVEPPAPTVLQKLVDEKQGHVVSVGKIADIYANCGITKKVKATGLDALFDATLKEMKEAGDKTIVFTNFVDFDSSWGHRRDIAGYAAGLELFDRRLPELMELVGEDDILILTADHGCDPSWTGTDHTREHIPVLIYGPKVKPGSLGHRETFADIGQTLATYFGTSPMDYGKNML</sequence>
<protein>
    <recommendedName>
        <fullName evidence="1">Phosphopentomutase</fullName>
        <ecNumber evidence="1">5.4.2.7</ecNumber>
    </recommendedName>
    <alternativeName>
        <fullName evidence="1">Phosphodeoxyribomutase</fullName>
    </alternativeName>
</protein>
<evidence type="ECO:0000255" key="1">
    <source>
        <dbReference type="HAMAP-Rule" id="MF_00740"/>
    </source>
</evidence>
<organism>
    <name type="scientific">Salmonella choleraesuis (strain SC-B67)</name>
    <dbReference type="NCBI Taxonomy" id="321314"/>
    <lineage>
        <taxon>Bacteria</taxon>
        <taxon>Pseudomonadati</taxon>
        <taxon>Pseudomonadota</taxon>
        <taxon>Gammaproteobacteria</taxon>
        <taxon>Enterobacterales</taxon>
        <taxon>Enterobacteriaceae</taxon>
        <taxon>Salmonella</taxon>
    </lineage>
</organism>
<dbReference type="EC" id="5.4.2.7" evidence="1"/>
<dbReference type="EMBL" id="AE017220">
    <property type="protein sequence ID" value="AAX68323.1"/>
    <property type="molecule type" value="Genomic_DNA"/>
</dbReference>
<dbReference type="RefSeq" id="WP_000816459.1">
    <property type="nucleotide sequence ID" value="NC_006905.1"/>
</dbReference>
<dbReference type="SMR" id="Q57G39"/>
<dbReference type="KEGG" id="sec:SCH_4417"/>
<dbReference type="HOGENOM" id="CLU_053861_0_0_6"/>
<dbReference type="UniPathway" id="UPA00002">
    <property type="reaction ID" value="UER00467"/>
</dbReference>
<dbReference type="Proteomes" id="UP000000538">
    <property type="component" value="Chromosome"/>
</dbReference>
<dbReference type="GO" id="GO:0005829">
    <property type="term" value="C:cytosol"/>
    <property type="evidence" value="ECO:0007669"/>
    <property type="project" value="TreeGrafter"/>
</dbReference>
<dbReference type="GO" id="GO:0000287">
    <property type="term" value="F:magnesium ion binding"/>
    <property type="evidence" value="ECO:0007669"/>
    <property type="project" value="InterPro"/>
</dbReference>
<dbReference type="GO" id="GO:0030145">
    <property type="term" value="F:manganese ion binding"/>
    <property type="evidence" value="ECO:0007669"/>
    <property type="project" value="UniProtKB-UniRule"/>
</dbReference>
<dbReference type="GO" id="GO:0008973">
    <property type="term" value="F:phosphopentomutase activity"/>
    <property type="evidence" value="ECO:0007669"/>
    <property type="project" value="UniProtKB-UniRule"/>
</dbReference>
<dbReference type="GO" id="GO:0006018">
    <property type="term" value="P:2-deoxyribose 1-phosphate catabolic process"/>
    <property type="evidence" value="ECO:0007669"/>
    <property type="project" value="UniProtKB-UniRule"/>
</dbReference>
<dbReference type="GO" id="GO:0006015">
    <property type="term" value="P:5-phosphoribose 1-diphosphate biosynthetic process"/>
    <property type="evidence" value="ECO:0007669"/>
    <property type="project" value="UniProtKB-UniPathway"/>
</dbReference>
<dbReference type="GO" id="GO:0043094">
    <property type="term" value="P:metabolic compound salvage"/>
    <property type="evidence" value="ECO:0007669"/>
    <property type="project" value="InterPro"/>
</dbReference>
<dbReference type="GO" id="GO:0009117">
    <property type="term" value="P:nucleotide metabolic process"/>
    <property type="evidence" value="ECO:0007669"/>
    <property type="project" value="InterPro"/>
</dbReference>
<dbReference type="CDD" id="cd16009">
    <property type="entry name" value="PPM"/>
    <property type="match status" value="1"/>
</dbReference>
<dbReference type="FunFam" id="3.30.70.1250:FF:000001">
    <property type="entry name" value="Phosphopentomutase"/>
    <property type="match status" value="1"/>
</dbReference>
<dbReference type="Gene3D" id="3.40.720.10">
    <property type="entry name" value="Alkaline Phosphatase, subunit A"/>
    <property type="match status" value="1"/>
</dbReference>
<dbReference type="Gene3D" id="3.30.70.1250">
    <property type="entry name" value="Phosphopentomutase"/>
    <property type="match status" value="1"/>
</dbReference>
<dbReference type="HAMAP" id="MF_00740">
    <property type="entry name" value="Phosphopentomut"/>
    <property type="match status" value="1"/>
</dbReference>
<dbReference type="InterPro" id="IPR017850">
    <property type="entry name" value="Alkaline_phosphatase_core_sf"/>
</dbReference>
<dbReference type="InterPro" id="IPR010045">
    <property type="entry name" value="DeoB"/>
</dbReference>
<dbReference type="InterPro" id="IPR006124">
    <property type="entry name" value="Metalloenzyme"/>
</dbReference>
<dbReference type="InterPro" id="IPR024052">
    <property type="entry name" value="Phosphopentomutase_DeoB_cap_sf"/>
</dbReference>
<dbReference type="NCBIfam" id="TIGR01696">
    <property type="entry name" value="deoB"/>
    <property type="match status" value="1"/>
</dbReference>
<dbReference type="NCBIfam" id="NF003766">
    <property type="entry name" value="PRK05362.1"/>
    <property type="match status" value="1"/>
</dbReference>
<dbReference type="PANTHER" id="PTHR21110">
    <property type="entry name" value="PHOSPHOPENTOMUTASE"/>
    <property type="match status" value="1"/>
</dbReference>
<dbReference type="PANTHER" id="PTHR21110:SF0">
    <property type="entry name" value="PHOSPHOPENTOMUTASE"/>
    <property type="match status" value="1"/>
</dbReference>
<dbReference type="Pfam" id="PF01676">
    <property type="entry name" value="Metalloenzyme"/>
    <property type="match status" value="1"/>
</dbReference>
<dbReference type="PIRSF" id="PIRSF001491">
    <property type="entry name" value="Ppentomutase"/>
    <property type="match status" value="1"/>
</dbReference>
<dbReference type="SUPFAM" id="SSF53649">
    <property type="entry name" value="Alkaline phosphatase-like"/>
    <property type="match status" value="1"/>
</dbReference>
<dbReference type="SUPFAM" id="SSF143856">
    <property type="entry name" value="DeoB insert domain-like"/>
    <property type="match status" value="1"/>
</dbReference>
<accession>Q57G39</accession>
<keyword id="KW-0963">Cytoplasm</keyword>
<keyword id="KW-0413">Isomerase</keyword>
<keyword id="KW-0464">Manganese</keyword>
<keyword id="KW-0479">Metal-binding</keyword>
<feature type="chain" id="PRO_0000258301" description="Phosphopentomutase">
    <location>
        <begin position="1"/>
        <end position="407"/>
    </location>
</feature>
<feature type="binding site" evidence="1">
    <location>
        <position position="10"/>
    </location>
    <ligand>
        <name>Mn(2+)</name>
        <dbReference type="ChEBI" id="CHEBI:29035"/>
        <label>1</label>
    </ligand>
</feature>
<feature type="binding site" evidence="1">
    <location>
        <position position="306"/>
    </location>
    <ligand>
        <name>Mn(2+)</name>
        <dbReference type="ChEBI" id="CHEBI:29035"/>
        <label>2</label>
    </ligand>
</feature>
<feature type="binding site" evidence="1">
    <location>
        <position position="311"/>
    </location>
    <ligand>
        <name>Mn(2+)</name>
        <dbReference type="ChEBI" id="CHEBI:29035"/>
        <label>2</label>
    </ligand>
</feature>
<feature type="binding site" evidence="1">
    <location>
        <position position="347"/>
    </location>
    <ligand>
        <name>Mn(2+)</name>
        <dbReference type="ChEBI" id="CHEBI:29035"/>
        <label>1</label>
    </ligand>
</feature>
<feature type="binding site" evidence="1">
    <location>
        <position position="348"/>
    </location>
    <ligand>
        <name>Mn(2+)</name>
        <dbReference type="ChEBI" id="CHEBI:29035"/>
        <label>1</label>
    </ligand>
</feature>
<feature type="binding site" evidence="1">
    <location>
        <position position="359"/>
    </location>
    <ligand>
        <name>Mn(2+)</name>
        <dbReference type="ChEBI" id="CHEBI:29035"/>
        <label>2</label>
    </ligand>
</feature>